<dbReference type="EC" id="2.3.-.-"/>
<dbReference type="EMBL" id="CU329671">
    <property type="protein sequence ID" value="CAB75994.1"/>
    <property type="molecule type" value="Genomic_DNA"/>
</dbReference>
<dbReference type="PIR" id="T50332">
    <property type="entry name" value="T50332"/>
</dbReference>
<dbReference type="SMR" id="Q9P7P0"/>
<dbReference type="FunCoup" id="Q9P7P0">
    <property type="interactions" value="86"/>
</dbReference>
<dbReference type="STRING" id="284812.Q9P7P0"/>
<dbReference type="iPTMnet" id="Q9P7P0"/>
<dbReference type="PaxDb" id="4896-SPBC1718.04.1"/>
<dbReference type="EnsemblFungi" id="SPBC1718.04.1">
    <property type="protein sequence ID" value="SPBC1718.04.1:pep"/>
    <property type="gene ID" value="SPBC1718.04"/>
</dbReference>
<dbReference type="KEGG" id="spo:2540110"/>
<dbReference type="PomBase" id="SPBC1718.04"/>
<dbReference type="VEuPathDB" id="FungiDB:SPBC1718.04"/>
<dbReference type="eggNOG" id="ENOG502QQ2N">
    <property type="taxonomic scope" value="Eukaryota"/>
</dbReference>
<dbReference type="HOGENOM" id="CLU_007860_1_0_1"/>
<dbReference type="InParanoid" id="Q9P7P0"/>
<dbReference type="OMA" id="YTHFKDD"/>
<dbReference type="PhylomeDB" id="Q9P7P0"/>
<dbReference type="PRO" id="PR:Q9P7P0"/>
<dbReference type="Proteomes" id="UP000002485">
    <property type="component" value="Chromosome II"/>
</dbReference>
<dbReference type="GO" id="GO:0005783">
    <property type="term" value="C:endoplasmic reticulum"/>
    <property type="evidence" value="ECO:0007005"/>
    <property type="project" value="PomBase"/>
</dbReference>
<dbReference type="GO" id="GO:0005789">
    <property type="term" value="C:endoplasmic reticulum membrane"/>
    <property type="evidence" value="ECO:0007669"/>
    <property type="project" value="UniProtKB-SubCell"/>
</dbReference>
<dbReference type="GO" id="GO:0004366">
    <property type="term" value="F:glycerol-3-phosphate O-acyltransferase activity"/>
    <property type="evidence" value="ECO:0000318"/>
    <property type="project" value="GO_Central"/>
</dbReference>
<dbReference type="GO" id="GO:0016287">
    <property type="term" value="F:glycerone-phosphate O-acyltransferase activity"/>
    <property type="evidence" value="ECO:0000318"/>
    <property type="project" value="GO_Central"/>
</dbReference>
<dbReference type="GO" id="GO:0008654">
    <property type="term" value="P:phospholipid biosynthetic process"/>
    <property type="evidence" value="ECO:0000318"/>
    <property type="project" value="GO_Central"/>
</dbReference>
<dbReference type="CDD" id="cd07992">
    <property type="entry name" value="LPLAT_AAK14816-like"/>
    <property type="match status" value="1"/>
</dbReference>
<dbReference type="InterPro" id="IPR052744">
    <property type="entry name" value="GPAT/DAPAT"/>
</dbReference>
<dbReference type="InterPro" id="IPR002123">
    <property type="entry name" value="Plipid/glycerol_acylTrfase"/>
</dbReference>
<dbReference type="PANTHER" id="PTHR31605">
    <property type="entry name" value="GLYCEROL-3-PHOSPHATE O-ACYLTRANSFERASE 1"/>
    <property type="match status" value="1"/>
</dbReference>
<dbReference type="PANTHER" id="PTHR31605:SF0">
    <property type="entry name" value="GLYCEROL-3-PHOSPHATE O-ACYLTRANSFERASE 1"/>
    <property type="match status" value="1"/>
</dbReference>
<dbReference type="Pfam" id="PF01553">
    <property type="entry name" value="Acyltransferase"/>
    <property type="match status" value="1"/>
</dbReference>
<dbReference type="SMART" id="SM00563">
    <property type="entry name" value="PlsC"/>
    <property type="match status" value="1"/>
</dbReference>
<dbReference type="SUPFAM" id="SSF69593">
    <property type="entry name" value="Glycerol-3-phosphate (1)-acyltransferase"/>
    <property type="match status" value="2"/>
</dbReference>
<evidence type="ECO:0000255" key="1"/>
<evidence type="ECO:0000256" key="2">
    <source>
        <dbReference type="SAM" id="MobiDB-lite"/>
    </source>
</evidence>
<evidence type="ECO:0000269" key="3">
    <source>
    </source>
</evidence>
<evidence type="ECO:0000269" key="4">
    <source>
    </source>
</evidence>
<evidence type="ECO:0000305" key="5"/>
<proteinExistence type="evidence at protein level"/>
<keyword id="KW-0012">Acyltransferase</keyword>
<keyword id="KW-0256">Endoplasmic reticulum</keyword>
<keyword id="KW-0472">Membrane</keyword>
<keyword id="KW-0597">Phosphoprotein</keyword>
<keyword id="KW-1185">Reference proteome</keyword>
<keyword id="KW-0808">Transferase</keyword>
<keyword id="KW-0812">Transmembrane</keyword>
<keyword id="KW-1133">Transmembrane helix</keyword>
<sequence length="675" mass="76628">MQHTFIYDTCLWILSILIDFFFREVKTRGSFRVPRKGPLILVAAPHANQFVDPLILMLQLRREVGRRTSILVAAKSYRQRFIGLMSRAFGAIPVERAQDLAIRGEGKIFVVAEGDKTAIHGKDTLFTKHSVGDTLLLPNNYGSSHIASIKSDTLLYVKREFRGEDAERVLLSPEGSSYKVAPEIDQTYVYNEVRRRLVKGACIALFPEGGSHDRPEMLPLKAGVAIMALETLSQHPDCGLQLLPCGMNYFHPHRFRSRAVLEFGSPLSIPTEYVELYKAKKRREAIQGVLDMIYDALLSVTVQAPDYETLMVIQACRRLYKPAHIQFALPKVVDLNRKLIVGYNHFKHDPRVIRLHDKILLYNRQLYRLGLRDHQVQSLQYSRFMILYKLVYRCCKLFLLALGALPGAILFSPVFIAAHRISVKKAAAALKASSVKIQGRDILATWKLLVALGMTPILYSFYALLCCYYIYSYKLIPHSSIFVYTVPIISTFLFPMVTYAALRFGEVAVDIYKSIRPLFLALIPSKANAVYILKDERKQLVAEVTDLINKLGPELFPDFDPDRITTTIEKPERPSRFARRLSSSVASDVDNLSQLHDTDLNSEVSAPAPLQNVYLYSPNPSALPPSDEEEKDINDKAKLIRNALRQRMGQRMTEIRSRDTPPEEVFSESDEELSD</sequence>
<comment type="subcellular location">
    <subcellularLocation>
        <location evidence="3">Endoplasmic reticulum membrane</location>
        <topology evidence="3">Multi-pass membrane protein</topology>
    </subcellularLocation>
</comment>
<comment type="similarity">
    <text evidence="5">Belongs to the 1-acyl-sn-glycerol-3-phosphate acyltransferase family.</text>
</comment>
<gene>
    <name type="ORF">SPBC1718.04</name>
</gene>
<organism>
    <name type="scientific">Schizosaccharomyces pombe (strain 972 / ATCC 24843)</name>
    <name type="common">Fission yeast</name>
    <dbReference type="NCBI Taxonomy" id="284812"/>
    <lineage>
        <taxon>Eukaryota</taxon>
        <taxon>Fungi</taxon>
        <taxon>Dikarya</taxon>
        <taxon>Ascomycota</taxon>
        <taxon>Taphrinomycotina</taxon>
        <taxon>Schizosaccharomycetes</taxon>
        <taxon>Schizosaccharomycetales</taxon>
        <taxon>Schizosaccharomycetaceae</taxon>
        <taxon>Schizosaccharomyces</taxon>
    </lineage>
</organism>
<protein>
    <recommendedName>
        <fullName>Uncharacterized acyltransferase C1718.04</fullName>
        <ecNumber>2.3.-.-</ecNumber>
    </recommendedName>
</protein>
<reference key="1">
    <citation type="journal article" date="2002" name="Nature">
        <title>The genome sequence of Schizosaccharomyces pombe.</title>
        <authorList>
            <person name="Wood V."/>
            <person name="Gwilliam R."/>
            <person name="Rajandream M.A."/>
            <person name="Lyne M.H."/>
            <person name="Lyne R."/>
            <person name="Stewart A."/>
            <person name="Sgouros J.G."/>
            <person name="Peat N."/>
            <person name="Hayles J."/>
            <person name="Baker S.G."/>
            <person name="Basham D."/>
            <person name="Bowman S."/>
            <person name="Brooks K."/>
            <person name="Brown D."/>
            <person name="Brown S."/>
            <person name="Chillingworth T."/>
            <person name="Churcher C.M."/>
            <person name="Collins M."/>
            <person name="Connor R."/>
            <person name="Cronin A."/>
            <person name="Davis P."/>
            <person name="Feltwell T."/>
            <person name="Fraser A."/>
            <person name="Gentles S."/>
            <person name="Goble A."/>
            <person name="Hamlin N."/>
            <person name="Harris D.E."/>
            <person name="Hidalgo J."/>
            <person name="Hodgson G."/>
            <person name="Holroyd S."/>
            <person name="Hornsby T."/>
            <person name="Howarth S."/>
            <person name="Huckle E.J."/>
            <person name="Hunt S."/>
            <person name="Jagels K."/>
            <person name="James K.D."/>
            <person name="Jones L."/>
            <person name="Jones M."/>
            <person name="Leather S."/>
            <person name="McDonald S."/>
            <person name="McLean J."/>
            <person name="Mooney P."/>
            <person name="Moule S."/>
            <person name="Mungall K.L."/>
            <person name="Murphy L.D."/>
            <person name="Niblett D."/>
            <person name="Odell C."/>
            <person name="Oliver K."/>
            <person name="O'Neil S."/>
            <person name="Pearson D."/>
            <person name="Quail M.A."/>
            <person name="Rabbinowitsch E."/>
            <person name="Rutherford K.M."/>
            <person name="Rutter S."/>
            <person name="Saunders D."/>
            <person name="Seeger K."/>
            <person name="Sharp S."/>
            <person name="Skelton J."/>
            <person name="Simmonds M.N."/>
            <person name="Squares R."/>
            <person name="Squares S."/>
            <person name="Stevens K."/>
            <person name="Taylor K."/>
            <person name="Taylor R.G."/>
            <person name="Tivey A."/>
            <person name="Walsh S.V."/>
            <person name="Warren T."/>
            <person name="Whitehead S."/>
            <person name="Woodward J.R."/>
            <person name="Volckaert G."/>
            <person name="Aert R."/>
            <person name="Robben J."/>
            <person name="Grymonprez B."/>
            <person name="Weltjens I."/>
            <person name="Vanstreels E."/>
            <person name="Rieger M."/>
            <person name="Schaefer M."/>
            <person name="Mueller-Auer S."/>
            <person name="Gabel C."/>
            <person name="Fuchs M."/>
            <person name="Duesterhoeft A."/>
            <person name="Fritzc C."/>
            <person name="Holzer E."/>
            <person name="Moestl D."/>
            <person name="Hilbert H."/>
            <person name="Borzym K."/>
            <person name="Langer I."/>
            <person name="Beck A."/>
            <person name="Lehrach H."/>
            <person name="Reinhardt R."/>
            <person name="Pohl T.M."/>
            <person name="Eger P."/>
            <person name="Zimmermann W."/>
            <person name="Wedler H."/>
            <person name="Wambutt R."/>
            <person name="Purnelle B."/>
            <person name="Goffeau A."/>
            <person name="Cadieu E."/>
            <person name="Dreano S."/>
            <person name="Gloux S."/>
            <person name="Lelaure V."/>
            <person name="Mottier S."/>
            <person name="Galibert F."/>
            <person name="Aves S.J."/>
            <person name="Xiang Z."/>
            <person name="Hunt C."/>
            <person name="Moore K."/>
            <person name="Hurst S.M."/>
            <person name="Lucas M."/>
            <person name="Rochet M."/>
            <person name="Gaillardin C."/>
            <person name="Tallada V.A."/>
            <person name="Garzon A."/>
            <person name="Thode G."/>
            <person name="Daga R.R."/>
            <person name="Cruzado L."/>
            <person name="Jimenez J."/>
            <person name="Sanchez M."/>
            <person name="del Rey F."/>
            <person name="Benito J."/>
            <person name="Dominguez A."/>
            <person name="Revuelta J.L."/>
            <person name="Moreno S."/>
            <person name="Armstrong J."/>
            <person name="Forsburg S.L."/>
            <person name="Cerutti L."/>
            <person name="Lowe T."/>
            <person name="McCombie W.R."/>
            <person name="Paulsen I."/>
            <person name="Potashkin J."/>
            <person name="Shpakovski G.V."/>
            <person name="Ussery D."/>
            <person name="Barrell B.G."/>
            <person name="Nurse P."/>
        </authorList>
    </citation>
    <scope>NUCLEOTIDE SEQUENCE [LARGE SCALE GENOMIC DNA]</scope>
    <source>
        <strain>972 / ATCC 24843</strain>
    </source>
</reference>
<reference key="2">
    <citation type="journal article" date="2006" name="Nat. Biotechnol.">
        <title>ORFeome cloning and global analysis of protein localization in the fission yeast Schizosaccharomyces pombe.</title>
        <authorList>
            <person name="Matsuyama A."/>
            <person name="Arai R."/>
            <person name="Yashiroda Y."/>
            <person name="Shirai A."/>
            <person name="Kamata A."/>
            <person name="Sekido S."/>
            <person name="Kobayashi Y."/>
            <person name="Hashimoto A."/>
            <person name="Hamamoto M."/>
            <person name="Hiraoka Y."/>
            <person name="Horinouchi S."/>
            <person name="Yoshida M."/>
        </authorList>
    </citation>
    <scope>SUBCELLULAR LOCATION [LARGE SCALE ANALYSIS]</scope>
</reference>
<reference key="3">
    <citation type="journal article" date="2008" name="J. Proteome Res.">
        <title>Phosphoproteome analysis of fission yeast.</title>
        <authorList>
            <person name="Wilson-Grady J.T."/>
            <person name="Villen J."/>
            <person name="Gygi S.P."/>
        </authorList>
    </citation>
    <scope>PHOSPHORYLATION [LARGE SCALE ANALYSIS] AT SER-669</scope>
    <scope>IDENTIFICATION BY MASS SPECTROMETRY</scope>
</reference>
<feature type="chain" id="PRO_0000317313" description="Uncharacterized acyltransferase C1718.04">
    <location>
        <begin position="1"/>
        <end position="675"/>
    </location>
</feature>
<feature type="transmembrane region" description="Helical" evidence="1">
    <location>
        <begin position="2"/>
        <end position="22"/>
    </location>
</feature>
<feature type="transmembrane region" description="Helical" evidence="1">
    <location>
        <begin position="397"/>
        <end position="417"/>
    </location>
</feature>
<feature type="transmembrane region" description="Helical" evidence="1">
    <location>
        <begin position="448"/>
        <end position="468"/>
    </location>
</feature>
<feature type="transmembrane region" description="Helical" evidence="1">
    <location>
        <begin position="481"/>
        <end position="501"/>
    </location>
</feature>
<feature type="region of interest" description="Disordered" evidence="2">
    <location>
        <begin position="616"/>
        <end position="635"/>
    </location>
</feature>
<feature type="region of interest" description="Disordered" evidence="2">
    <location>
        <begin position="646"/>
        <end position="675"/>
    </location>
</feature>
<feature type="compositionally biased region" description="Acidic residues" evidence="2">
    <location>
        <begin position="665"/>
        <end position="675"/>
    </location>
</feature>
<feature type="modified residue" description="Phosphoserine" evidence="4">
    <location>
        <position position="669"/>
    </location>
</feature>
<name>YOL4_SCHPO</name>
<accession>Q9P7P0</accession>